<accession>Q63921</accession>
<accession>Q62731</accession>
<accession>Q63684</accession>
<organism>
    <name type="scientific">Rattus norvegicus</name>
    <name type="common">Rat</name>
    <dbReference type="NCBI Taxonomy" id="10116"/>
    <lineage>
        <taxon>Eukaryota</taxon>
        <taxon>Metazoa</taxon>
        <taxon>Chordata</taxon>
        <taxon>Craniata</taxon>
        <taxon>Vertebrata</taxon>
        <taxon>Euteleostomi</taxon>
        <taxon>Mammalia</taxon>
        <taxon>Eutheria</taxon>
        <taxon>Euarchontoglires</taxon>
        <taxon>Glires</taxon>
        <taxon>Rodentia</taxon>
        <taxon>Myomorpha</taxon>
        <taxon>Muroidea</taxon>
        <taxon>Muridae</taxon>
        <taxon>Murinae</taxon>
        <taxon>Rattus</taxon>
    </lineage>
</organism>
<dbReference type="EC" id="1.14.99.1" evidence="3"/>
<dbReference type="EMBL" id="U03388">
    <property type="protein sequence ID" value="AAA03465.1"/>
    <property type="molecule type" value="mRNA"/>
</dbReference>
<dbReference type="EMBL" id="S67721">
    <property type="protein sequence ID" value="AAB29400.2"/>
    <property type="molecule type" value="mRNA"/>
</dbReference>
<dbReference type="EMBL" id="U18060">
    <property type="protein sequence ID" value="AAA85823.1"/>
    <property type="molecule type" value="mRNA"/>
</dbReference>
<dbReference type="PIR" id="S39782">
    <property type="entry name" value="S39782"/>
</dbReference>
<dbReference type="PIR" id="S69198">
    <property type="entry name" value="S69198"/>
</dbReference>
<dbReference type="SMR" id="Q63921"/>
<dbReference type="FunCoup" id="Q63921">
    <property type="interactions" value="213"/>
</dbReference>
<dbReference type="IntAct" id="Q63921">
    <property type="interactions" value="1"/>
</dbReference>
<dbReference type="STRING" id="10116.ENSRNOP00000010218"/>
<dbReference type="BindingDB" id="Q63921"/>
<dbReference type="ChEMBL" id="CHEMBL4042"/>
<dbReference type="DrugCentral" id="Q63921"/>
<dbReference type="PeroxiBase" id="3974">
    <property type="entry name" value="RnoPGHS01"/>
</dbReference>
<dbReference type="GlyCosmos" id="Q63921">
    <property type="glycosylation" value="4 sites, No reported glycans"/>
</dbReference>
<dbReference type="GlyGen" id="Q63921">
    <property type="glycosylation" value="4 sites"/>
</dbReference>
<dbReference type="PhosphoSitePlus" id="Q63921"/>
<dbReference type="jPOST" id="Q63921"/>
<dbReference type="PaxDb" id="10116-ENSRNOP00000010218"/>
<dbReference type="UCSC" id="RGD:3439">
    <property type="organism name" value="rat"/>
</dbReference>
<dbReference type="AGR" id="RGD:3439"/>
<dbReference type="RGD" id="3439">
    <property type="gene designation" value="Ptgs1"/>
</dbReference>
<dbReference type="eggNOG" id="KOG2408">
    <property type="taxonomic scope" value="Eukaryota"/>
</dbReference>
<dbReference type="InParanoid" id="Q63921"/>
<dbReference type="PhylomeDB" id="Q63921"/>
<dbReference type="BRENDA" id="1.14.99.1">
    <property type="organism ID" value="5301"/>
</dbReference>
<dbReference type="Reactome" id="R-RNO-140180">
    <property type="pathway name" value="COX reactions"/>
</dbReference>
<dbReference type="Reactome" id="R-RNO-2162123">
    <property type="pathway name" value="Synthesis of Prostaglandins (PG) and Thromboxanes (TX)"/>
</dbReference>
<dbReference type="UniPathway" id="UPA00662"/>
<dbReference type="PRO" id="PR:Q63921"/>
<dbReference type="Proteomes" id="UP000002494">
    <property type="component" value="Unplaced"/>
</dbReference>
<dbReference type="GO" id="GO:0005737">
    <property type="term" value="C:cytoplasm"/>
    <property type="evidence" value="ECO:0000250"/>
    <property type="project" value="UniProtKB"/>
</dbReference>
<dbReference type="GO" id="GO:0005789">
    <property type="term" value="C:endoplasmic reticulum membrane"/>
    <property type="evidence" value="ECO:0007669"/>
    <property type="project" value="UniProtKB-SubCell"/>
</dbReference>
<dbReference type="GO" id="GO:0043005">
    <property type="term" value="C:neuron projection"/>
    <property type="evidence" value="ECO:0000318"/>
    <property type="project" value="GO_Central"/>
</dbReference>
<dbReference type="GO" id="GO:0005635">
    <property type="term" value="C:nuclear envelope"/>
    <property type="evidence" value="ECO:0000314"/>
    <property type="project" value="RGD"/>
</dbReference>
<dbReference type="GO" id="GO:0001750">
    <property type="term" value="C:photoreceptor outer segment"/>
    <property type="evidence" value="ECO:0000266"/>
    <property type="project" value="RGD"/>
</dbReference>
<dbReference type="GO" id="GO:0020037">
    <property type="term" value="F:heme binding"/>
    <property type="evidence" value="ECO:0007669"/>
    <property type="project" value="InterPro"/>
</dbReference>
<dbReference type="GO" id="GO:0046872">
    <property type="term" value="F:metal ion binding"/>
    <property type="evidence" value="ECO:0007669"/>
    <property type="project" value="UniProtKB-KW"/>
</dbReference>
<dbReference type="GO" id="GO:0016702">
    <property type="term" value="F:oxidoreductase activity, acting on single donors with incorporation of molecular oxygen, incorporation of two atoms of oxygen"/>
    <property type="evidence" value="ECO:0000318"/>
    <property type="project" value="GO_Central"/>
</dbReference>
<dbReference type="GO" id="GO:0004601">
    <property type="term" value="F:peroxidase activity"/>
    <property type="evidence" value="ECO:0007669"/>
    <property type="project" value="UniProtKB-KW"/>
</dbReference>
<dbReference type="GO" id="GO:0004666">
    <property type="term" value="F:prostaglandin-endoperoxide synthase activity"/>
    <property type="evidence" value="ECO:0000266"/>
    <property type="project" value="RGD"/>
</dbReference>
<dbReference type="GO" id="GO:0019371">
    <property type="term" value="P:cyclooxygenase pathway"/>
    <property type="evidence" value="ECO:0000266"/>
    <property type="project" value="RGD"/>
</dbReference>
<dbReference type="GO" id="GO:0007612">
    <property type="term" value="P:learning"/>
    <property type="evidence" value="ECO:0000315"/>
    <property type="project" value="RGD"/>
</dbReference>
<dbReference type="GO" id="GO:0035633">
    <property type="term" value="P:maintenance of blood-brain barrier"/>
    <property type="evidence" value="ECO:0000315"/>
    <property type="project" value="RGD"/>
</dbReference>
<dbReference type="GO" id="GO:0007613">
    <property type="term" value="P:memory"/>
    <property type="evidence" value="ECO:0000315"/>
    <property type="project" value="RGD"/>
</dbReference>
<dbReference type="GO" id="GO:0032811">
    <property type="term" value="P:negative regulation of epinephrine secretion"/>
    <property type="evidence" value="ECO:0000315"/>
    <property type="project" value="RGD"/>
</dbReference>
<dbReference type="GO" id="GO:0010700">
    <property type="term" value="P:negative regulation of norepinephrine secretion"/>
    <property type="evidence" value="ECO:0000315"/>
    <property type="project" value="RGD"/>
</dbReference>
<dbReference type="GO" id="GO:0045987">
    <property type="term" value="P:positive regulation of smooth muscle contraction"/>
    <property type="evidence" value="ECO:0000315"/>
    <property type="project" value="RGD"/>
</dbReference>
<dbReference type="GO" id="GO:0045907">
    <property type="term" value="P:positive regulation of vasoconstriction"/>
    <property type="evidence" value="ECO:0000315"/>
    <property type="project" value="RGD"/>
</dbReference>
<dbReference type="GO" id="GO:0001516">
    <property type="term" value="P:prostaglandin biosynthetic process"/>
    <property type="evidence" value="ECO:0000315"/>
    <property type="project" value="RGD"/>
</dbReference>
<dbReference type="GO" id="GO:0006693">
    <property type="term" value="P:prostaglandin metabolic process"/>
    <property type="evidence" value="ECO:0000266"/>
    <property type="project" value="RGD"/>
</dbReference>
<dbReference type="GO" id="GO:0008217">
    <property type="term" value="P:regulation of blood pressure"/>
    <property type="evidence" value="ECO:0000250"/>
    <property type="project" value="UniProtKB"/>
</dbReference>
<dbReference type="GO" id="GO:0042127">
    <property type="term" value="P:regulation of cell population proliferation"/>
    <property type="evidence" value="ECO:0000266"/>
    <property type="project" value="RGD"/>
</dbReference>
<dbReference type="GO" id="GO:0051412">
    <property type="term" value="P:response to corticosterone"/>
    <property type="evidence" value="ECO:0000270"/>
    <property type="project" value="RGD"/>
</dbReference>
<dbReference type="GO" id="GO:0070542">
    <property type="term" value="P:response to fatty acid"/>
    <property type="evidence" value="ECO:0000270"/>
    <property type="project" value="RGD"/>
</dbReference>
<dbReference type="GO" id="GO:0006979">
    <property type="term" value="P:response to oxidative stress"/>
    <property type="evidence" value="ECO:0007669"/>
    <property type="project" value="InterPro"/>
</dbReference>
<dbReference type="CDD" id="cd00054">
    <property type="entry name" value="EGF_CA"/>
    <property type="match status" value="1"/>
</dbReference>
<dbReference type="CDD" id="cd09816">
    <property type="entry name" value="prostaglandin_endoperoxide_synthase"/>
    <property type="match status" value="1"/>
</dbReference>
<dbReference type="FunFam" id="1.10.640.10:FF:000002">
    <property type="entry name" value="Prostaglandin G/H synthase 2"/>
    <property type="match status" value="1"/>
</dbReference>
<dbReference type="FunFam" id="2.10.25.10:FF:000235">
    <property type="entry name" value="Prostaglandin G/H synthase 2"/>
    <property type="match status" value="1"/>
</dbReference>
<dbReference type="Gene3D" id="1.10.640.10">
    <property type="entry name" value="Haem peroxidase domain superfamily, animal type"/>
    <property type="match status" value="1"/>
</dbReference>
<dbReference type="Gene3D" id="2.10.25.10">
    <property type="entry name" value="Laminin"/>
    <property type="match status" value="1"/>
</dbReference>
<dbReference type="InterPro" id="IPR000742">
    <property type="entry name" value="EGF-like_dom"/>
</dbReference>
<dbReference type="InterPro" id="IPR019791">
    <property type="entry name" value="Haem_peroxidase_animal"/>
</dbReference>
<dbReference type="InterPro" id="IPR010255">
    <property type="entry name" value="Haem_peroxidase_sf"/>
</dbReference>
<dbReference type="InterPro" id="IPR037120">
    <property type="entry name" value="Haem_peroxidase_sf_animal"/>
</dbReference>
<dbReference type="InterPro" id="IPR050783">
    <property type="entry name" value="Oxylipin_biosynth_metab"/>
</dbReference>
<dbReference type="PANTHER" id="PTHR11903">
    <property type="entry name" value="PROSTAGLANDIN G/H SYNTHASE"/>
    <property type="match status" value="1"/>
</dbReference>
<dbReference type="PANTHER" id="PTHR11903:SF6">
    <property type="entry name" value="PROSTAGLANDIN G_H SYNTHASE 1"/>
    <property type="match status" value="1"/>
</dbReference>
<dbReference type="Pfam" id="PF03098">
    <property type="entry name" value="An_peroxidase"/>
    <property type="match status" value="1"/>
</dbReference>
<dbReference type="PRINTS" id="PR00457">
    <property type="entry name" value="ANPEROXIDASE"/>
</dbReference>
<dbReference type="SUPFAM" id="SSF57196">
    <property type="entry name" value="EGF/Laminin"/>
    <property type="match status" value="1"/>
</dbReference>
<dbReference type="SUPFAM" id="SSF48113">
    <property type="entry name" value="Heme-dependent peroxidases"/>
    <property type="match status" value="1"/>
</dbReference>
<dbReference type="PROSITE" id="PS50026">
    <property type="entry name" value="EGF_3"/>
    <property type="match status" value="1"/>
</dbReference>
<dbReference type="PROSITE" id="PS50292">
    <property type="entry name" value="PEROXIDASE_3"/>
    <property type="match status" value="1"/>
</dbReference>
<evidence type="ECO:0000250" key="1"/>
<evidence type="ECO:0000250" key="2">
    <source>
        <dbReference type="UniProtKB" id="P05979"/>
    </source>
</evidence>
<evidence type="ECO:0000250" key="3">
    <source>
        <dbReference type="UniProtKB" id="P23219"/>
    </source>
</evidence>
<evidence type="ECO:0000255" key="4"/>
<evidence type="ECO:0000255" key="5">
    <source>
        <dbReference type="PROSITE-ProRule" id="PRU00076"/>
    </source>
</evidence>
<evidence type="ECO:0000255" key="6">
    <source>
        <dbReference type="PROSITE-ProRule" id="PRU00298"/>
    </source>
</evidence>
<evidence type="ECO:0000305" key="7"/>
<evidence type="ECO:0000312" key="8">
    <source>
        <dbReference type="RGD" id="3439"/>
    </source>
</evidence>
<gene>
    <name evidence="8" type="primary">Ptgs1</name>
    <name type="synonym">Cox-1</name>
    <name type="synonym">Cox1</name>
</gene>
<sequence>MSRRSLSLQFPLLLLLLLLPPPPVLLTDAGVPSPVNPCCYYPCQNQGVCVRFGLDHYQCDCTRTGYSGPNCTIPEIWTWLRSSLRPSPSFTHFLLTHGYWIWEFVNATFIREVLMRLVITVRSNLIPSPPTYNTAHDYISWESFSNVSYYTRILPSVPKDCPTPMGTKGKKQLPDIHLLAQRLLLRREFIPGPQGTNVLFAFFAQHFTHQFFKTSGKMGPGFTKALGHGVDLGHIYGDSLERQYHLRLFKDGKLKYQVLDGEVYPPSVEQASVLMRYPPGVPPEKQMAVGQEVFGLLPGLMLFSTIWLREHNRVCDLLKEEHPTWDDEQLFQTTRLILIGETIKIIIEEYVQHLSGYFLQLKFDPELLFRAQFQYRNRIALEFNHLYHWHPLMPDSFQVGSQEYSYEQFLFNTSMLVDYGVEALVDAFSRQRAGRIGGGRNFDYHVLHVAEDVIKESREMRLQSFNEYRKRFGLKPYTSFQEFTGEKEMAAELEELYGDIDALEFYPGLMLEKCQPNSLFGESMIEMGAPFSLKGLLGNPICSPEYWKPSTFGGDVGFNIVNTASLKKLVCLNTKTCPYVSFRVPDYPGDDGSVFVRPSTEL</sequence>
<keyword id="KW-0223">Dioxygenase</keyword>
<keyword id="KW-1015">Disulfide bond</keyword>
<keyword id="KW-0245">EGF-like domain</keyword>
<keyword id="KW-0256">Endoplasmic reticulum</keyword>
<keyword id="KW-0275">Fatty acid biosynthesis</keyword>
<keyword id="KW-0276">Fatty acid metabolism</keyword>
<keyword id="KW-0325">Glycoprotein</keyword>
<keyword id="KW-0349">Heme</keyword>
<keyword id="KW-0408">Iron</keyword>
<keyword id="KW-0444">Lipid biosynthesis</keyword>
<keyword id="KW-0443">Lipid metabolism</keyword>
<keyword id="KW-0472">Membrane</keyword>
<keyword id="KW-0479">Metal-binding</keyword>
<keyword id="KW-0492">Microsome</keyword>
<keyword id="KW-0560">Oxidoreductase</keyword>
<keyword id="KW-0575">Peroxidase</keyword>
<keyword id="KW-0643">Prostaglandin biosynthesis</keyword>
<keyword id="KW-0644">Prostaglandin metabolism</keyword>
<keyword id="KW-1185">Reference proteome</keyword>
<keyword id="KW-0732">Signal</keyword>
<name>PGH1_RAT</name>
<protein>
    <recommendedName>
        <fullName evidence="7">Prostaglandin G/H synthase 1</fullName>
        <ecNumber evidence="3">1.14.99.1</ecNumber>
    </recommendedName>
    <alternativeName>
        <fullName>Cyclooxygenase-1</fullName>
        <shortName>COX-1</shortName>
    </alternativeName>
    <alternativeName>
        <fullName>Prostaglandin H2 synthase 1</fullName>
        <shortName>PGH synthase 1</shortName>
        <shortName>PGHS-1</shortName>
        <shortName>PHS 1</shortName>
    </alternativeName>
    <alternativeName>
        <fullName>Prostaglandin-endoperoxide synthase 1</fullName>
    </alternativeName>
</protein>
<comment type="function">
    <text evidence="2">Dual cyclooxygenase and peroxidase that plays an important role in the biosynthesis pathway of prostanoids, a class of C20 oxylipins mainly derived from arachidonate ((5Z,8Z,11Z,14Z)-eicosatetraenoate, AA, C20:4(n-6)), with a particular role in the inflammatory response. The cyclooxygenase activity oxygenates AA to the hydroperoxy endoperoxide prostaglandin G2 (PGG2), and the peroxidase activity reduces PGG2 to the hydroxy endoperoxide prostaglandin H2 (PGH2), the precursor of all 2-series prostaglandins and thromboxanes. This complex transformation is initiated by abstraction of hydrogen at carbon 13 (with S-stereochemistry), followed by insertion of molecular O2 to form the endoperoxide bridge between carbon 9 and 11 that defines prostaglandins. The insertion of a second molecule of O2 (bis-oxygenase activity) yields a hydroperoxy group in PGG2 that is then reduced to PGH2 by two electrons. Involved in the constitutive production of prostanoids in particular in the stomach and platelets. In gastric epithelial cells, it is a key step in the generation of prostaglandins, such as prostaglandin E2 (PGE2), which plays an important role in cytoprotection. In platelets, it is involved in the generation of thromboxane A2 (TXA2), which promotes platelet activation and aggregation, vasoconstriction and proliferation of vascular smooth muscle cells. Can also use linoleate (LA, (9Z,12Z)-octadecadienoate, C18:2(n-6)) as substrate and produce hydroxyoctadecadienoates (HODEs) in a regio- and stereospecific manner, being (9R)-HODE ((9R)-hydroxy-(10E,12Z)-octadecadienoate) and (13S)-HODE ((13S)-hydroxy-(9Z,11E)-octadecadienoate) its major products.</text>
</comment>
<comment type="catalytic activity">
    <reaction evidence="3">
        <text>(5Z,8Z,11Z,14Z)-eicosatetraenoate + AH2 + 2 O2 = prostaglandin H2 + A + H2O</text>
        <dbReference type="Rhea" id="RHEA:23728"/>
        <dbReference type="ChEBI" id="CHEBI:13193"/>
        <dbReference type="ChEBI" id="CHEBI:15377"/>
        <dbReference type="ChEBI" id="CHEBI:15379"/>
        <dbReference type="ChEBI" id="CHEBI:17499"/>
        <dbReference type="ChEBI" id="CHEBI:32395"/>
        <dbReference type="ChEBI" id="CHEBI:57405"/>
        <dbReference type="EC" id="1.14.99.1"/>
    </reaction>
    <physiologicalReaction direction="left-to-right" evidence="3">
        <dbReference type="Rhea" id="RHEA:23729"/>
    </physiologicalReaction>
</comment>
<comment type="catalytic activity">
    <reaction evidence="3">
        <text>(5Z,8Z,11Z,14Z)-eicosatetraenoate + 2 O2 = prostaglandin G2</text>
        <dbReference type="Rhea" id="RHEA:42596"/>
        <dbReference type="ChEBI" id="CHEBI:15379"/>
        <dbReference type="ChEBI" id="CHEBI:32395"/>
        <dbReference type="ChEBI" id="CHEBI:82629"/>
    </reaction>
    <physiologicalReaction direction="left-to-right" evidence="3">
        <dbReference type="Rhea" id="RHEA:42597"/>
    </physiologicalReaction>
</comment>
<comment type="catalytic activity">
    <reaction evidence="3">
        <text>prostaglandin G2 + AH2 = prostaglandin H2 + A + H2O</text>
        <dbReference type="Rhea" id="RHEA:42600"/>
        <dbReference type="ChEBI" id="CHEBI:13193"/>
        <dbReference type="ChEBI" id="CHEBI:15377"/>
        <dbReference type="ChEBI" id="CHEBI:17499"/>
        <dbReference type="ChEBI" id="CHEBI:57405"/>
        <dbReference type="ChEBI" id="CHEBI:82629"/>
    </reaction>
    <physiologicalReaction direction="left-to-right" evidence="3">
        <dbReference type="Rhea" id="RHEA:42601"/>
    </physiologicalReaction>
</comment>
<comment type="catalytic activity">
    <reaction evidence="2">
        <text>(9Z,12Z)-octadecadienoate + AH2 + O2 = (9R)-hydroxy-(10E,12Z)-octadecadienoate + A + H2O</text>
        <dbReference type="Rhea" id="RHEA:75447"/>
        <dbReference type="ChEBI" id="CHEBI:13193"/>
        <dbReference type="ChEBI" id="CHEBI:15377"/>
        <dbReference type="ChEBI" id="CHEBI:15379"/>
        <dbReference type="ChEBI" id="CHEBI:17499"/>
        <dbReference type="ChEBI" id="CHEBI:30245"/>
        <dbReference type="ChEBI" id="CHEBI:77895"/>
    </reaction>
    <physiologicalReaction direction="left-to-right" evidence="2">
        <dbReference type="Rhea" id="RHEA:75448"/>
    </physiologicalReaction>
</comment>
<comment type="catalytic activity">
    <reaction evidence="2">
        <text>(9Z,12Z)-octadecadienoate + AH2 + O2 = (9S)-hydroxy-(10E,12Z)-octadecadienoate + A + H2O</text>
        <dbReference type="Rhea" id="RHEA:75459"/>
        <dbReference type="ChEBI" id="CHEBI:13193"/>
        <dbReference type="ChEBI" id="CHEBI:15377"/>
        <dbReference type="ChEBI" id="CHEBI:15379"/>
        <dbReference type="ChEBI" id="CHEBI:17499"/>
        <dbReference type="ChEBI" id="CHEBI:30245"/>
        <dbReference type="ChEBI" id="CHEBI:77852"/>
    </reaction>
    <physiologicalReaction direction="left-to-right" evidence="2">
        <dbReference type="Rhea" id="RHEA:75460"/>
    </physiologicalReaction>
</comment>
<comment type="catalytic activity">
    <reaction evidence="2">
        <text>(9Z,12Z)-octadecadienoate + AH2 + O2 = (13S)-hydroxy-(9Z,11E)-octadecadienoate + A + H2O</text>
        <dbReference type="Rhea" id="RHEA:75451"/>
        <dbReference type="ChEBI" id="CHEBI:13193"/>
        <dbReference type="ChEBI" id="CHEBI:15377"/>
        <dbReference type="ChEBI" id="CHEBI:15379"/>
        <dbReference type="ChEBI" id="CHEBI:17499"/>
        <dbReference type="ChEBI" id="CHEBI:30245"/>
        <dbReference type="ChEBI" id="CHEBI:90850"/>
    </reaction>
    <physiologicalReaction direction="left-to-right" evidence="2">
        <dbReference type="Rhea" id="RHEA:75452"/>
    </physiologicalReaction>
</comment>
<comment type="catalytic activity">
    <reaction evidence="2">
        <text>(9Z,12Z)-octadecadienoate + AH2 + O2 = (13R)-hydroxy-(9Z,11E)-octadecadienoate + A + H2O</text>
        <dbReference type="Rhea" id="RHEA:75455"/>
        <dbReference type="ChEBI" id="CHEBI:13193"/>
        <dbReference type="ChEBI" id="CHEBI:15377"/>
        <dbReference type="ChEBI" id="CHEBI:15379"/>
        <dbReference type="ChEBI" id="CHEBI:17499"/>
        <dbReference type="ChEBI" id="CHEBI:30245"/>
        <dbReference type="ChEBI" id="CHEBI:136655"/>
    </reaction>
    <physiologicalReaction direction="left-to-right" evidence="2">
        <dbReference type="Rhea" id="RHEA:75456"/>
    </physiologicalReaction>
</comment>
<comment type="cofactor">
    <cofactor evidence="1">
        <name>heme b</name>
        <dbReference type="ChEBI" id="CHEBI:60344"/>
    </cofactor>
    <text evidence="1">Binds 1 heme b (iron(II)-protoporphyrin IX) group per subunit.</text>
</comment>
<comment type="activity regulation">
    <text evidence="3">The cyclooxygenase activity is inhibited by nonsteroidal anti-inflammatory drugs (NSAIDs) including ibuprofen, flurbiprofen, ketoprofen, naproxen, flurbiprofen, anirolac, fenclofenac and diclofenac.</text>
</comment>
<comment type="pathway">
    <text evidence="3">Lipid metabolism; prostaglandin biosynthesis.</text>
</comment>
<comment type="subunit">
    <text evidence="1">Homodimer.</text>
</comment>
<comment type="subcellular location">
    <subcellularLocation>
        <location>Microsome membrane</location>
        <topology>Peripheral membrane protein</topology>
    </subcellularLocation>
    <subcellularLocation>
        <location>Endoplasmic reticulum membrane</location>
        <topology>Peripheral membrane protein</topology>
    </subcellularLocation>
</comment>
<comment type="miscellaneous">
    <text>The conversion of arachidonate to prostaglandin H2 is a 2 step reaction: a cyclooxygenase (COX) reaction which converts arachidonate to prostaglandin G2 (PGG2) and a peroxidase reaction in which PGG2 is reduced to prostaglandin H2 (PGH2). The cyclooxygenase reaction occurs in a hydrophobic channel in the core of the enzyme. The peroxidase reaction occurs at a heme-containing active site located near the protein surface. The nonsteroidal anti-inflammatory drugs (NSAIDs) binding site corresponds to the cyclooxygenase active site.</text>
</comment>
<comment type="miscellaneous">
    <text>Conversion of arachidonate to prostaglandin H2 is mediated by 2 different isozymes: the constitutive PTGS1 and the inducible PTGS2. PTGS1 is expressed constitutively and generally produces prostanoids acutely in response to hormonal stimuli to fine-tune physiological processes requiring instantaneous, continuous regulation (e.g. hemostasis). PTGS2 is inducible and typically produces prostanoids that mediate responses to physiological stresses such as infection and inflammation.</text>
</comment>
<comment type="miscellaneous">
    <text>PTGS1 and PTGS2 are the targets of nonsteroidal anti-inflammatory drugs (NSAIDs) including aspirin and ibuprofen. Aspirin is able to produce an irreversible inactivation of the enzyme through a serine acetylation. Inhibition of the PGHSs with NSAIDs acutely reduces inflammation, pain, and fever, and long-term use of these drugs reduces fatal thrombotic events, as well as the development of colon cancer and Alzheimer's disease. PTGS2 is the principal isozyme responsible for production of inflammatory prostaglandins. New generation PTGSs inhibitors strive to be selective for PTGS2, to avoid side effects such as gastrointestinal complications and ulceration.</text>
</comment>
<comment type="similarity">
    <text evidence="7">Belongs to the prostaglandin G/H synthase family.</text>
</comment>
<reference key="1">
    <citation type="journal article" date="1993" name="Arch. Biochem. Biophys.">
        <title>Cloning two isoforms of rat cyclooxygenase: differential regulation of their expression.</title>
        <authorList>
            <person name="Feng L."/>
            <person name="Sun W."/>
            <person name="Xia Y."/>
            <person name="Tang W.W."/>
            <person name="Chanmugam P."/>
            <person name="Soyoola E."/>
            <person name="Wilson C.B."/>
            <person name="Hwang D."/>
        </authorList>
    </citation>
    <scope>NUCLEOTIDE SEQUENCE [MRNA]</scope>
    <source>
        <strain>Sprague-Dawley</strain>
    </source>
</reference>
<reference key="2">
    <citation type="journal article" date="1995" name="Arch. Biochem. Biophys.">
        <title>Analysis and quantitation of splicing variants of the TPA-inducible PGHS-1 mRNA in rat tracheal epithelial cells.</title>
        <authorList>
            <person name="Kitzler J."/>
            <person name="Hill E."/>
            <person name="Hardman R."/>
            <person name="Reddy N."/>
            <person name="Philpot R."/>
            <person name="Eling T.E."/>
        </authorList>
    </citation>
    <scope>NUCLEOTIDE SEQUENCE [MRNA]</scope>
    <source>
        <strain>Fischer 344</strain>
        <tissue>Trachea</tissue>
    </source>
</reference>
<reference key="3">
    <citation type="journal article" date="2000" name="Annu. Rev. Biochem.">
        <title>Cyclooxygenases: structural, cellular, and molecular biology.</title>
        <authorList>
            <person name="Smith W.L."/>
            <person name="DeWitt D.L."/>
            <person name="Garavito R.M."/>
        </authorList>
    </citation>
    <scope>REVIEW ON FUNCTION; TISSUE SPECIFICITY AND INHIBITION BY NSAIDS</scope>
</reference>
<reference key="4">
    <citation type="journal article" date="2014" name="World J. Gastrointest. Pharmacol. Ther.">
        <title>Aspirin, cyclooxygenase inhibition and colorectal cancer.</title>
        <authorList>
            <person name="Sostres C."/>
            <person name="Gargallo C.J."/>
            <person name="Lanas A."/>
        </authorList>
    </citation>
    <scope>REVIEW ON FUNCTION; INHIBITION BY ASPIRIN AND INVOLVEMENT IN COLORECTAL CANCER</scope>
</reference>
<proteinExistence type="evidence at transcript level"/>
<feature type="signal peptide" evidence="1">
    <location>
        <begin position="1"/>
        <end position="26"/>
    </location>
</feature>
<feature type="chain" id="PRO_0000023870" description="Prostaglandin G/H synthase 1">
    <location>
        <begin position="27"/>
        <end position="602"/>
    </location>
</feature>
<feature type="domain" description="EGF-like" evidence="5">
    <location>
        <begin position="34"/>
        <end position="72"/>
    </location>
</feature>
<feature type="active site" description="Proton acceptor" evidence="6">
    <location>
        <position position="209"/>
    </location>
</feature>
<feature type="active site" description="For cyclooxygenase activity" evidence="1">
    <location>
        <position position="387"/>
    </location>
</feature>
<feature type="binding site" description="axial binding residue" evidence="6">
    <location>
        <position position="390"/>
    </location>
    <ligand>
        <name>heme b</name>
        <dbReference type="ChEBI" id="CHEBI:60344"/>
    </ligand>
    <ligandPart>
        <name>Fe</name>
        <dbReference type="ChEBI" id="CHEBI:18248"/>
    </ligandPart>
</feature>
<feature type="site" description="Aspirin-acetylated serine">
    <location>
        <position position="532"/>
    </location>
</feature>
<feature type="glycosylation site" description="N-linked (GlcNAc...) asparagine" evidence="4">
    <location>
        <position position="70"/>
    </location>
</feature>
<feature type="glycosylation site" description="N-linked (GlcNAc...) asparagine" evidence="4">
    <location>
        <position position="106"/>
    </location>
</feature>
<feature type="glycosylation site" description="N-linked (GlcNAc...) asparagine" evidence="4">
    <location>
        <position position="146"/>
    </location>
</feature>
<feature type="glycosylation site" description="N-linked (GlcNAc...) asparagine" evidence="4">
    <location>
        <position position="412"/>
    </location>
</feature>
<feature type="disulfide bond" evidence="1">
    <location>
        <begin position="38"/>
        <end position="49"/>
    </location>
</feature>
<feature type="disulfide bond" evidence="1">
    <location>
        <begin position="39"/>
        <end position="161"/>
    </location>
</feature>
<feature type="disulfide bond" evidence="1">
    <location>
        <begin position="43"/>
        <end position="59"/>
    </location>
</feature>
<feature type="disulfide bond" evidence="1">
    <location>
        <begin position="61"/>
        <end position="71"/>
    </location>
</feature>
<feature type="disulfide bond" evidence="1">
    <location>
        <begin position="571"/>
        <end position="577"/>
    </location>
</feature>
<feature type="sequence conflict" description="In Ref. 1; AAA03465/AAB29400." evidence="7" ref="1">
    <original>N</original>
    <variation>I</variation>
    <location>
        <position position="36"/>
    </location>
</feature>
<feature type="sequence conflict" description="In Ref. 1." evidence="7" ref="1">
    <original>RL</original>
    <variation>GW</variation>
    <location>
        <begin position="116"/>
        <end position="117"/>
    </location>
</feature>
<feature type="sequence conflict" description="In Ref. 1." evidence="7" ref="1">
    <original>I</original>
    <variation>L</variation>
    <location>
        <position position="119"/>
    </location>
</feature>
<feature type="sequence conflict" description="In Ref. 1; AAA03465/AAB29400." evidence="7" ref="1">
    <original>G</original>
    <variation>A</variation>
    <location>
        <position position="192"/>
    </location>
</feature>
<feature type="sequence conflict" description="In Ref. 1; AAA03465/AAB29400." evidence="7" ref="1">
    <original>V</original>
    <variation>L</variation>
    <location>
        <position position="263"/>
    </location>
</feature>
<feature type="sequence conflict" description="In Ref. 1; AAA03465/AAB29400." evidence="7" ref="1">
    <original>L</original>
    <variation>K</variation>
    <location>
        <position position="274"/>
    </location>
</feature>
<feature type="sequence conflict" description="In Ref. 1; AAA03465/AAB29400." evidence="7" ref="1">
    <original>G</original>
    <variation>A</variation>
    <location>
        <position position="290"/>
    </location>
</feature>
<feature type="sequence conflict" description="In Ref. 1; AAB29400." evidence="7" ref="1">
    <original>I</original>
    <variation>R</variation>
    <location>
        <position position="339"/>
    </location>
</feature>
<feature type="sequence conflict" description="In Ref. 1; AAA03465/AAB29400." evidence="7" ref="1">
    <original>K</original>
    <variation>E</variation>
    <location>
        <position position="344"/>
    </location>
</feature>
<feature type="sequence conflict" description="In Ref. 1; AAA03465/AAB29400." evidence="7" ref="1">
    <original>L</original>
    <variation>M</variation>
    <location>
        <position position="381"/>
    </location>
</feature>
<feature type="sequence conflict" description="In Ref. 1; AAA03465/AAB29400." evidence="7" ref="1">
    <original>L</original>
    <variation>F</variation>
    <location>
        <position position="392"/>
    </location>
</feature>